<gene>
    <name evidence="5 10" type="primary">obst-E</name>
    <name evidence="10" type="ORF">CG11142</name>
</gene>
<organism evidence="11">
    <name type="scientific">Drosophila melanogaster</name>
    <name type="common">Fruit fly</name>
    <dbReference type="NCBI Taxonomy" id="7227"/>
    <lineage>
        <taxon>Eukaryota</taxon>
        <taxon>Metazoa</taxon>
        <taxon>Ecdysozoa</taxon>
        <taxon>Arthropoda</taxon>
        <taxon>Hexapoda</taxon>
        <taxon>Insecta</taxon>
        <taxon>Pterygota</taxon>
        <taxon>Neoptera</taxon>
        <taxon>Endopterygota</taxon>
        <taxon>Diptera</taxon>
        <taxon>Brachycera</taxon>
        <taxon>Muscomorpha</taxon>
        <taxon>Ephydroidea</taxon>
        <taxon>Drosophilidae</taxon>
        <taxon>Drosophila</taxon>
        <taxon>Sophophora</taxon>
    </lineage>
</organism>
<comment type="function">
    <text evidence="4">Chitin-binding protein that is important for the longitudinal contraction and lateral expansion of the larval cuticle during its conversion into the oval-shaped puparium case. Essential for survival to the second instar larval stage. Confers the orientated contractility and expandability of the larval cuticle by regulating the arrangement of chitin and the formation of supracellular ridges on the cuticle of third instar larvae. Essential for determining pupal body shape; required for the orientated shape change of the cuticle during metamorphosis which involves changes in the morphology of the supracellular ridges.</text>
</comment>
<comment type="function">
    <molecule>Isoform A</molecule>
    <text evidence="4">Mainly involved in regulating pupal shape.</text>
</comment>
<comment type="function">
    <molecule>Isoform B</molecule>
    <text evidence="4">Mainly involved in larvae survival, possibly by maintaining the normal morphology of the larval hindgut during development.</text>
</comment>
<comment type="subcellular location">
    <subcellularLocation>
        <location evidence="4">Secreted</location>
        <location evidence="4">Extracellular space</location>
        <location evidence="4">Extracellular matrix</location>
    </subcellularLocation>
</comment>
<comment type="alternative products">
    <event type="alternative splicing"/>
    <isoform>
        <id>Q9VMM6-1</id>
        <name evidence="5 10">B</name>
        <sequence type="displayed"/>
    </isoform>
    <isoform>
        <id>Q9VMM6-2</id>
        <name evidence="5 10">A</name>
        <sequence type="described" ref="VSP_058877 VSP_058878 VSP_058879 VSP_058880"/>
    </isoform>
</comment>
<comment type="tissue specificity">
    <molecule>Isoform A</molecule>
    <text evidence="4">Uniformly expressed throughout the cuticle of third instar larva.</text>
</comment>
<comment type="disruption phenotype">
    <text evidence="4">Larval lethal at the first instar stage. Hindgut development during embryogenesis appears normal but at the first instar larval stage the hindgut protrudes out of the anus and probably causes the lethality.</text>
</comment>
<accession>Q9VMM6</accession>
<accession>Q8IGU3</accession>
<accession>Q8T0V6</accession>
<reference evidence="11" key="1">
    <citation type="journal article" date="2000" name="Science">
        <title>The genome sequence of Drosophila melanogaster.</title>
        <authorList>
            <person name="Adams M.D."/>
            <person name="Celniker S.E."/>
            <person name="Holt R.A."/>
            <person name="Evans C.A."/>
            <person name="Gocayne J.D."/>
            <person name="Amanatides P.G."/>
            <person name="Scherer S.E."/>
            <person name="Li P.W."/>
            <person name="Hoskins R.A."/>
            <person name="Galle R.F."/>
            <person name="George R.A."/>
            <person name="Lewis S.E."/>
            <person name="Richards S."/>
            <person name="Ashburner M."/>
            <person name="Henderson S.N."/>
            <person name="Sutton G.G."/>
            <person name="Wortman J.R."/>
            <person name="Yandell M.D."/>
            <person name="Zhang Q."/>
            <person name="Chen L.X."/>
            <person name="Brandon R.C."/>
            <person name="Rogers Y.-H.C."/>
            <person name="Blazej R.G."/>
            <person name="Champe M."/>
            <person name="Pfeiffer B.D."/>
            <person name="Wan K.H."/>
            <person name="Doyle C."/>
            <person name="Baxter E.G."/>
            <person name="Helt G."/>
            <person name="Nelson C.R."/>
            <person name="Miklos G.L.G."/>
            <person name="Abril J.F."/>
            <person name="Agbayani A."/>
            <person name="An H.-J."/>
            <person name="Andrews-Pfannkoch C."/>
            <person name="Baldwin D."/>
            <person name="Ballew R.M."/>
            <person name="Basu A."/>
            <person name="Baxendale J."/>
            <person name="Bayraktaroglu L."/>
            <person name="Beasley E.M."/>
            <person name="Beeson K.Y."/>
            <person name="Benos P.V."/>
            <person name="Berman B.P."/>
            <person name="Bhandari D."/>
            <person name="Bolshakov S."/>
            <person name="Borkova D."/>
            <person name="Botchan M.R."/>
            <person name="Bouck J."/>
            <person name="Brokstein P."/>
            <person name="Brottier P."/>
            <person name="Burtis K.C."/>
            <person name="Busam D.A."/>
            <person name="Butler H."/>
            <person name="Cadieu E."/>
            <person name="Center A."/>
            <person name="Chandra I."/>
            <person name="Cherry J.M."/>
            <person name="Cawley S."/>
            <person name="Dahlke C."/>
            <person name="Davenport L.B."/>
            <person name="Davies P."/>
            <person name="de Pablos B."/>
            <person name="Delcher A."/>
            <person name="Deng Z."/>
            <person name="Mays A.D."/>
            <person name="Dew I."/>
            <person name="Dietz S.M."/>
            <person name="Dodson K."/>
            <person name="Doup L.E."/>
            <person name="Downes M."/>
            <person name="Dugan-Rocha S."/>
            <person name="Dunkov B.C."/>
            <person name="Dunn P."/>
            <person name="Durbin K.J."/>
            <person name="Evangelista C.C."/>
            <person name="Ferraz C."/>
            <person name="Ferriera S."/>
            <person name="Fleischmann W."/>
            <person name="Fosler C."/>
            <person name="Gabrielian A.E."/>
            <person name="Garg N.S."/>
            <person name="Gelbart W.M."/>
            <person name="Glasser K."/>
            <person name="Glodek A."/>
            <person name="Gong F."/>
            <person name="Gorrell J.H."/>
            <person name="Gu Z."/>
            <person name="Guan P."/>
            <person name="Harris M."/>
            <person name="Harris N.L."/>
            <person name="Harvey D.A."/>
            <person name="Heiman T.J."/>
            <person name="Hernandez J.R."/>
            <person name="Houck J."/>
            <person name="Hostin D."/>
            <person name="Houston K.A."/>
            <person name="Howland T.J."/>
            <person name="Wei M.-H."/>
            <person name="Ibegwam C."/>
            <person name="Jalali M."/>
            <person name="Kalush F."/>
            <person name="Karpen G.H."/>
            <person name="Ke Z."/>
            <person name="Kennison J.A."/>
            <person name="Ketchum K.A."/>
            <person name="Kimmel B.E."/>
            <person name="Kodira C.D."/>
            <person name="Kraft C.L."/>
            <person name="Kravitz S."/>
            <person name="Kulp D."/>
            <person name="Lai Z."/>
            <person name="Lasko P."/>
            <person name="Lei Y."/>
            <person name="Levitsky A.A."/>
            <person name="Li J.H."/>
            <person name="Li Z."/>
            <person name="Liang Y."/>
            <person name="Lin X."/>
            <person name="Liu X."/>
            <person name="Mattei B."/>
            <person name="McIntosh T.C."/>
            <person name="McLeod M.P."/>
            <person name="McPherson D."/>
            <person name="Merkulov G."/>
            <person name="Milshina N.V."/>
            <person name="Mobarry C."/>
            <person name="Morris J."/>
            <person name="Moshrefi A."/>
            <person name="Mount S.M."/>
            <person name="Moy M."/>
            <person name="Murphy B."/>
            <person name="Murphy L."/>
            <person name="Muzny D.M."/>
            <person name="Nelson D.L."/>
            <person name="Nelson D.R."/>
            <person name="Nelson K.A."/>
            <person name="Nixon K."/>
            <person name="Nusskern D.R."/>
            <person name="Pacleb J.M."/>
            <person name="Palazzolo M."/>
            <person name="Pittman G.S."/>
            <person name="Pan S."/>
            <person name="Pollard J."/>
            <person name="Puri V."/>
            <person name="Reese M.G."/>
            <person name="Reinert K."/>
            <person name="Remington K."/>
            <person name="Saunders R.D.C."/>
            <person name="Scheeler F."/>
            <person name="Shen H."/>
            <person name="Shue B.C."/>
            <person name="Siden-Kiamos I."/>
            <person name="Simpson M."/>
            <person name="Skupski M.P."/>
            <person name="Smith T.J."/>
            <person name="Spier E."/>
            <person name="Spradling A.C."/>
            <person name="Stapleton M."/>
            <person name="Strong R."/>
            <person name="Sun E."/>
            <person name="Svirskas R."/>
            <person name="Tector C."/>
            <person name="Turner R."/>
            <person name="Venter E."/>
            <person name="Wang A.H."/>
            <person name="Wang X."/>
            <person name="Wang Z.-Y."/>
            <person name="Wassarman D.A."/>
            <person name="Weinstock G.M."/>
            <person name="Weissenbach J."/>
            <person name="Williams S.M."/>
            <person name="Woodage T."/>
            <person name="Worley K.C."/>
            <person name="Wu D."/>
            <person name="Yang S."/>
            <person name="Yao Q.A."/>
            <person name="Ye J."/>
            <person name="Yeh R.-F."/>
            <person name="Zaveri J.S."/>
            <person name="Zhan M."/>
            <person name="Zhang G."/>
            <person name="Zhao Q."/>
            <person name="Zheng L."/>
            <person name="Zheng X.H."/>
            <person name="Zhong F.N."/>
            <person name="Zhong W."/>
            <person name="Zhou X."/>
            <person name="Zhu S.C."/>
            <person name="Zhu X."/>
            <person name="Smith H.O."/>
            <person name="Gibbs R.A."/>
            <person name="Myers E.W."/>
            <person name="Rubin G.M."/>
            <person name="Venter J.C."/>
        </authorList>
    </citation>
    <scope>NUCLEOTIDE SEQUENCE [LARGE SCALE GENOMIC DNA]</scope>
    <source>
        <strain evidence="11">Berkeley</strain>
    </source>
</reference>
<reference evidence="11" key="2">
    <citation type="journal article" date="2002" name="Genome Biol.">
        <title>Annotation of the Drosophila melanogaster euchromatic genome: a systematic review.</title>
        <authorList>
            <person name="Misra S."/>
            <person name="Crosby M.A."/>
            <person name="Mungall C.J."/>
            <person name="Matthews B.B."/>
            <person name="Campbell K.S."/>
            <person name="Hradecky P."/>
            <person name="Huang Y."/>
            <person name="Kaminker J.S."/>
            <person name="Millburn G.H."/>
            <person name="Prochnik S.E."/>
            <person name="Smith C.D."/>
            <person name="Tupy J.L."/>
            <person name="Whitfield E.J."/>
            <person name="Bayraktaroglu L."/>
            <person name="Berman B.P."/>
            <person name="Bettencourt B.R."/>
            <person name="Celniker S.E."/>
            <person name="de Grey A.D.N.J."/>
            <person name="Drysdale R.A."/>
            <person name="Harris N.L."/>
            <person name="Richter J."/>
            <person name="Russo S."/>
            <person name="Schroeder A.J."/>
            <person name="Shu S.Q."/>
            <person name="Stapleton M."/>
            <person name="Yamada C."/>
            <person name="Ashburner M."/>
            <person name="Gelbart W.M."/>
            <person name="Rubin G.M."/>
            <person name="Lewis S.E."/>
        </authorList>
    </citation>
    <scope>GENOME REANNOTATION</scope>
    <source>
        <strain evidence="11">Berkeley</strain>
    </source>
</reference>
<reference evidence="7 8" key="3">
    <citation type="journal article" date="2002" name="Genome Biol.">
        <title>A Drosophila full-length cDNA resource.</title>
        <authorList>
            <person name="Stapleton M."/>
            <person name="Carlson J.W."/>
            <person name="Brokstein P."/>
            <person name="Yu C."/>
            <person name="Champe M."/>
            <person name="George R.A."/>
            <person name="Guarin H."/>
            <person name="Kronmiller B."/>
            <person name="Pacleb J.M."/>
            <person name="Park S."/>
            <person name="Wan K.H."/>
            <person name="Rubin G.M."/>
            <person name="Celniker S.E."/>
        </authorList>
    </citation>
    <scope>NUCLEOTIDE SEQUENCE [LARGE SCALE MRNA] (ISOFORMS A AND B)</scope>
    <source>
        <strain evidence="7 8">Berkeley</strain>
        <tissue evidence="8">Embryo</tissue>
        <tissue evidence="7">Head</tissue>
    </source>
</reference>
<reference evidence="9" key="4">
    <citation type="submission" date="2009-10" db="EMBL/GenBank/DDBJ databases">
        <authorList>
            <person name="Carlson J."/>
            <person name="Booth B."/>
            <person name="Frise E."/>
            <person name="Park S."/>
            <person name="Wan K."/>
            <person name="Yu C."/>
            <person name="Celniker S."/>
        </authorList>
    </citation>
    <scope>NUCLEOTIDE SEQUENCE [LARGE SCALE MRNA] (ISOFORM B)</scope>
</reference>
<reference evidence="6" key="5">
    <citation type="journal article" date="2017" name="PLoS Genet.">
        <title>Mechanical Control of Whole Body Shape by a Single Cuticular Protein Obstructor-E in Drosophila melanogaster.</title>
        <authorList>
            <person name="Tajiri R."/>
            <person name="Ogawa N."/>
            <person name="Fujiwara H."/>
            <person name="Kojima T."/>
        </authorList>
    </citation>
    <scope>FUNCTION (ISOFORMS A AND B)</scope>
    <scope>SUBCELLULAR LOCATION (ISOFORM A)</scope>
    <scope>TISSUE SPECIFICITY (ISOFORM A)</scope>
    <scope>DISRUPTION PHENOTYPE (ISOFORMS A AND B)</scope>
</reference>
<feature type="signal peptide" evidence="1">
    <location>
        <begin position="1"/>
        <end position="21"/>
    </location>
</feature>
<feature type="chain" id="PRO_5009349125" description="Protein obstructor-E" evidence="1">
    <location>
        <begin position="22"/>
        <end position="249"/>
    </location>
</feature>
<feature type="domain" description="Chitin-binding type-2 1" evidence="2">
    <location>
        <begin position="22"/>
        <end position="80"/>
    </location>
</feature>
<feature type="domain" description="Chitin-binding type-2 2" evidence="2">
    <location>
        <begin position="90"/>
        <end position="148"/>
    </location>
</feature>
<feature type="domain" description="Chitin-binding type-2 3" evidence="2">
    <location>
        <begin position="170"/>
        <end position="227"/>
    </location>
</feature>
<feature type="glycosylation site" description="N-linked (GlcNAc...) asparagine" evidence="3">
    <location>
        <position position="88"/>
    </location>
</feature>
<feature type="disulfide bond" evidence="2">
    <location>
        <begin position="54"/>
        <end position="70"/>
    </location>
</feature>
<feature type="disulfide bond" evidence="2">
    <location>
        <begin position="124"/>
        <end position="137"/>
    </location>
</feature>
<feature type="disulfide bond" evidence="2">
    <location>
        <begin position="203"/>
        <end position="216"/>
    </location>
</feature>
<feature type="splice variant" id="VSP_058877" description="In isoform A.">
    <original>LGSPECPTPNGRFASGDQCDSYTECQDGTPV</original>
    <variation>AAAAGACKEANGTAPVSGSCDAYIECKNGVAE</variation>
    <location>
        <begin position="20"/>
        <end position="50"/>
    </location>
</feature>
<feature type="splice variant" id="VSP_058878" description="In isoform A.">
    <original>FHQRTKATGECTYAPYSTCKERARLQPANGTEECPRQFGFYPNGDATKCGVYRNCAHGVASLTK</original>
    <variation>YNEKSTGYPCGYPIDVECTQGQARLQAAQPTDECPHQFGYYRMGDASHCGQFMNCAAGRGFVFD</variation>
    <location>
        <begin position="60"/>
        <end position="123"/>
    </location>
</feature>
<feature type="splice variant" id="VSP_058879" description="In isoform A.">
    <original>FNEETYQ</original>
    <variation>WNPATYK</variation>
    <location>
        <begin position="130"/>
        <end position="136"/>
    </location>
</feature>
<feature type="splice variant" id="VSP_058880" description="In isoform A.">
    <original>LVESCNAEAYLGFNCPAADSADDSAAAAVDVSPEGELRYYRHPQTCKKYFVCVNGHPRLYNCGKYLAFNSQTKLCDFYNKVPECYALLKEKQRLKAEKQQPQVAQPED</original>
    <variation>QVEDCDAEAFLGFRCPAPAPRSELLGEQEADYTFHPSQDNCQVYFICIEGRPRRIGCGEDQAFNQELNQCDDIENVPNCSSAIREKGAQIKAARLHARKN</variation>
    <location>
        <begin position="142"/>
        <end position="249"/>
    </location>
</feature>
<feature type="sequence conflict" description="In Ref. 3; AAN71355." evidence="6" ref="3">
    <original>R</original>
    <variation>S</variation>
    <location>
        <position position="179"/>
    </location>
</feature>
<evidence type="ECO:0000255" key="1"/>
<evidence type="ECO:0000255" key="2">
    <source>
        <dbReference type="PROSITE-ProRule" id="PRU00144"/>
    </source>
</evidence>
<evidence type="ECO:0000255" key="3">
    <source>
        <dbReference type="PROSITE-ProRule" id="PRU00498"/>
    </source>
</evidence>
<evidence type="ECO:0000269" key="4">
    <source>
    </source>
</evidence>
<evidence type="ECO:0000303" key="5">
    <source>
    </source>
</evidence>
<evidence type="ECO:0000305" key="6"/>
<evidence type="ECO:0000312" key="7">
    <source>
        <dbReference type="EMBL" id="AAL39176.1"/>
    </source>
</evidence>
<evidence type="ECO:0000312" key="8">
    <source>
        <dbReference type="EMBL" id="AAN71355.1"/>
    </source>
</evidence>
<evidence type="ECO:0000312" key="9">
    <source>
        <dbReference type="EMBL" id="ACX47660.1"/>
    </source>
</evidence>
<evidence type="ECO:0000312" key="10">
    <source>
        <dbReference type="FlyBase" id="FBgn0031737"/>
    </source>
</evidence>
<evidence type="ECO:0000312" key="11">
    <source>
        <dbReference type="Proteomes" id="UP000000803"/>
    </source>
</evidence>
<protein>
    <recommendedName>
        <fullName evidence="5">Protein obstructor-E</fullName>
    </recommendedName>
</protein>
<name>OBSTE_DROME</name>
<dbReference type="EMBL" id="AE014134">
    <property type="protein sequence ID" value="AAF52287.2"/>
    <property type="molecule type" value="Genomic_DNA"/>
</dbReference>
<dbReference type="EMBL" id="AE014134">
    <property type="protein sequence ID" value="AAN10555.1"/>
    <property type="molecule type" value="Genomic_DNA"/>
</dbReference>
<dbReference type="EMBL" id="AY069031">
    <property type="protein sequence ID" value="AAL39176.1"/>
    <property type="molecule type" value="mRNA"/>
</dbReference>
<dbReference type="EMBL" id="BT099959">
    <property type="protein sequence ID" value="ACX47660.1"/>
    <property type="molecule type" value="mRNA"/>
</dbReference>
<dbReference type="EMBL" id="BT001600">
    <property type="protein sequence ID" value="AAN71355.1"/>
    <property type="molecule type" value="mRNA"/>
</dbReference>
<dbReference type="RefSeq" id="NP_608957.1">
    <molecule id="Q9VMM6-2"/>
    <property type="nucleotide sequence ID" value="NM_135113.3"/>
</dbReference>
<dbReference type="RefSeq" id="NP_723116.1">
    <molecule id="Q9VMM6-1"/>
    <property type="nucleotide sequence ID" value="NM_164659.3"/>
</dbReference>
<dbReference type="SMR" id="Q9VMM6"/>
<dbReference type="FunCoup" id="Q9VMM6">
    <property type="interactions" value="30"/>
</dbReference>
<dbReference type="IntAct" id="Q9VMM6">
    <property type="interactions" value="4"/>
</dbReference>
<dbReference type="STRING" id="7227.FBpp0078795"/>
<dbReference type="CAZy" id="CBM14">
    <property type="family name" value="Carbohydrate-Binding Module Family 14"/>
</dbReference>
<dbReference type="GlyCosmos" id="Q9VMM6">
    <property type="glycosylation" value="1 site, No reported glycans"/>
</dbReference>
<dbReference type="GlyGen" id="Q9VMM6">
    <property type="glycosylation" value="1 site"/>
</dbReference>
<dbReference type="PaxDb" id="7227-FBpp0078795"/>
<dbReference type="DNASU" id="33806"/>
<dbReference type="EnsemblMetazoa" id="FBtr0079163">
    <molecule id="Q9VMM6-2"/>
    <property type="protein sequence ID" value="FBpp0078794"/>
    <property type="gene ID" value="FBgn0031737"/>
</dbReference>
<dbReference type="EnsemblMetazoa" id="FBtr0079164">
    <molecule id="Q9VMM6-1"/>
    <property type="protein sequence ID" value="FBpp0078795"/>
    <property type="gene ID" value="FBgn0031737"/>
</dbReference>
<dbReference type="GeneID" id="33806"/>
<dbReference type="KEGG" id="dme:Dmel_CG11142"/>
<dbReference type="UCSC" id="CG11142-RA">
    <property type="organism name" value="d. melanogaster"/>
</dbReference>
<dbReference type="UCSC" id="CG11142-RB">
    <molecule id="Q9VMM6-1"/>
    <property type="organism name" value="d. melanogaster"/>
</dbReference>
<dbReference type="AGR" id="FB:FBgn0031737"/>
<dbReference type="CTD" id="33806"/>
<dbReference type="FlyBase" id="FBgn0031737">
    <property type="gene designation" value="obst-E"/>
</dbReference>
<dbReference type="VEuPathDB" id="VectorBase:FBgn0031737"/>
<dbReference type="eggNOG" id="ENOG502RXZX">
    <property type="taxonomic scope" value="Eukaryota"/>
</dbReference>
<dbReference type="HOGENOM" id="CLU_071682_2_1_1"/>
<dbReference type="InParanoid" id="Q9VMM6"/>
<dbReference type="OMA" id="GDETKCG"/>
<dbReference type="OrthoDB" id="9991479at2759"/>
<dbReference type="PhylomeDB" id="Q9VMM6"/>
<dbReference type="BioGRID-ORCS" id="33806">
    <property type="hits" value="0 hits in 1 CRISPR screen"/>
</dbReference>
<dbReference type="GenomeRNAi" id="33806"/>
<dbReference type="PRO" id="PR:Q9VMM6"/>
<dbReference type="Proteomes" id="UP000000803">
    <property type="component" value="Chromosome 2L"/>
</dbReference>
<dbReference type="Bgee" id="FBgn0031737">
    <property type="expression patterns" value="Expressed in second segment of antenna (Drosophila) and 82 other cell types or tissues"/>
</dbReference>
<dbReference type="ExpressionAtlas" id="Q9VMM6">
    <property type="expression patterns" value="baseline and differential"/>
</dbReference>
<dbReference type="GO" id="GO:0062129">
    <property type="term" value="C:chitin-based extracellular matrix"/>
    <property type="evidence" value="ECO:0000314"/>
    <property type="project" value="FlyBase"/>
</dbReference>
<dbReference type="GO" id="GO:0005576">
    <property type="term" value="C:extracellular region"/>
    <property type="evidence" value="ECO:0007669"/>
    <property type="project" value="UniProtKB-KW"/>
</dbReference>
<dbReference type="GO" id="GO:0008061">
    <property type="term" value="F:chitin binding"/>
    <property type="evidence" value="ECO:0000314"/>
    <property type="project" value="FlyBase"/>
</dbReference>
<dbReference type="GO" id="GO:0008010">
    <property type="term" value="F:structural constituent of chitin-based larval cuticle"/>
    <property type="evidence" value="ECO:0000314"/>
    <property type="project" value="FlyBase"/>
</dbReference>
<dbReference type="GO" id="GO:0008011">
    <property type="term" value="F:structural constituent of pupal chitin-based cuticle"/>
    <property type="evidence" value="ECO:0000314"/>
    <property type="project" value="FlyBase"/>
</dbReference>
<dbReference type="GO" id="GO:0040003">
    <property type="term" value="P:chitin-based cuticle development"/>
    <property type="evidence" value="ECO:0000315"/>
    <property type="project" value="FlyBase"/>
</dbReference>
<dbReference type="Gene3D" id="2.170.140.10">
    <property type="entry name" value="Chitin binding domain"/>
    <property type="match status" value="3"/>
</dbReference>
<dbReference type="InterPro" id="IPR002557">
    <property type="entry name" value="Chitin-bd_dom"/>
</dbReference>
<dbReference type="InterPro" id="IPR036508">
    <property type="entry name" value="Chitin-bd_dom_sf"/>
</dbReference>
<dbReference type="InterPro" id="IPR051940">
    <property type="entry name" value="Chitin_bind-dev_reg"/>
</dbReference>
<dbReference type="PANTHER" id="PTHR23301">
    <property type="entry name" value="CHITIN BINDING PERITROPHIN-A"/>
    <property type="match status" value="1"/>
</dbReference>
<dbReference type="PANTHER" id="PTHR23301:SF98">
    <property type="entry name" value="CHITIN-BINDING TYPE-2 DOMAIN-CONTAINING PROTEIN-RELATED"/>
    <property type="match status" value="1"/>
</dbReference>
<dbReference type="Pfam" id="PF01607">
    <property type="entry name" value="CBM_14"/>
    <property type="match status" value="3"/>
</dbReference>
<dbReference type="SMART" id="SM00494">
    <property type="entry name" value="ChtBD2"/>
    <property type="match status" value="3"/>
</dbReference>
<dbReference type="SUPFAM" id="SSF57625">
    <property type="entry name" value="Invertebrate chitin-binding proteins"/>
    <property type="match status" value="3"/>
</dbReference>
<dbReference type="PROSITE" id="PS50940">
    <property type="entry name" value="CHIT_BIND_II"/>
    <property type="match status" value="3"/>
</dbReference>
<sequence>MAKILISALLCVAMFGSMALGSPECPTPNGRFASGDQCDSYTECQDGTPVEKLCPDGLLFHQRTKATGECTYAPYSTCKERARLQPANGTEECPRQFGFYPNGDATKCGVYRNCAHGVASLTKCPEGLAFNEETYQCDWPDLVESCNAEAYLGFNCPAADSADDSAAAAVDVSPEGELRYYRHPQTCKKYFVCVNGHPRLYNCGKYLAFNSQTKLCDFYNKVPECYALLKEKQRLKAEKQQPQVAQPED</sequence>
<proteinExistence type="evidence at transcript level"/>
<keyword id="KW-0025">Alternative splicing</keyword>
<keyword id="KW-0147">Chitin-binding</keyword>
<keyword id="KW-0193">Cuticle</keyword>
<keyword id="KW-1015">Disulfide bond</keyword>
<keyword id="KW-0272">Extracellular matrix</keyword>
<keyword id="KW-0325">Glycoprotein</keyword>
<keyword id="KW-1185">Reference proteome</keyword>
<keyword id="KW-0677">Repeat</keyword>
<keyword id="KW-0964">Secreted</keyword>
<keyword id="KW-0732">Signal</keyword>